<reference key="1">
    <citation type="journal article" date="2004" name="Proc. Natl. Acad. Sci. U.S.A.">
        <title>Genome sequence of Picrophilus torridus and its implications for life around pH 0.</title>
        <authorList>
            <person name="Fuetterer O."/>
            <person name="Angelov A."/>
            <person name="Liesegang H."/>
            <person name="Gottschalk G."/>
            <person name="Schleper C."/>
            <person name="Schepers B."/>
            <person name="Dock C."/>
            <person name="Antranikian G."/>
            <person name="Liebl W."/>
        </authorList>
    </citation>
    <scope>NUCLEOTIDE SEQUENCE [LARGE SCALE GENOMIC DNA]</scope>
    <source>
        <strain>ATCC 700027 / DSM 9790 / JCM 10055 / NBRC 100828 / KAW 2/3</strain>
    </source>
</reference>
<sequence>MKMIQVLGTSSDSGKSTLATAFCRILKDLGYRVSPFKAVNMSLNSIAIKDGSEIARAQWVQAMAAGAEPSAYMNPVLLKPEGHHKSQVIILGRSIGSMGINDYYNYINKNAKIIKESIDFLSNKYDVIISEGAGSPAEINLAGRDFANIYVSSLYNTPAILVADIDRGGVFASIYGTINLMQRSDLLKYYIINKMRGDQSLLYPGIERIEELTGKKCLGIVPYIDLKLPGEDSLDYNFSGSGSIGIVRYPYMENYSDFDPLIFNEKAFYIKNKEDLKRCDVIILPGSKDVFHDLEYINSNGIADSIKRCSGEKMIIGICGGYQMLGKRINDASGVESDGVSIPGLGLLDIETYYNKTKTTGSVKYRFAENQLKINGSGTGYEIHYGSIVKNNEMPLLITDHGPEGSVSSNGMVIGTNVHGILENNEFYRYITGEYLDYDNIIENSIETLAGIVKKSINIEGFLELLNDA</sequence>
<comment type="function">
    <text evidence="1">Catalyzes amidations at positions B, D, E, and G on adenosylcobyrinic A,C-diamide. NH(2) groups are provided by glutamine, and one molecule of ATP is hydrogenolyzed for each amidation.</text>
</comment>
<comment type="pathway">
    <text evidence="1">Cofactor biosynthesis; adenosylcobalamin biosynthesis.</text>
</comment>
<comment type="similarity">
    <text evidence="1">Belongs to the CobB/CobQ family. CobQ subfamily.</text>
</comment>
<feature type="chain" id="PRO_0000141354" description="Probable cobyric acid synthase">
    <location>
        <begin position="1"/>
        <end position="469"/>
    </location>
</feature>
<feature type="domain" description="GATase cobBQ-type" evidence="1">
    <location>
        <begin position="241"/>
        <end position="427"/>
    </location>
</feature>
<feature type="active site" description="Nucleophile" evidence="1">
    <location>
        <position position="319"/>
    </location>
</feature>
<feature type="active site" evidence="1">
    <location>
        <position position="419"/>
    </location>
</feature>
<evidence type="ECO:0000255" key="1">
    <source>
        <dbReference type="HAMAP-Rule" id="MF_00028"/>
    </source>
</evidence>
<accession>Q6L0V5</accession>
<dbReference type="EMBL" id="AE017261">
    <property type="protein sequence ID" value="AAT43397.1"/>
    <property type="molecule type" value="Genomic_DNA"/>
</dbReference>
<dbReference type="RefSeq" id="WP_011177613.1">
    <property type="nucleotide sequence ID" value="NC_005877.1"/>
</dbReference>
<dbReference type="SMR" id="Q6L0V5"/>
<dbReference type="FunCoup" id="Q6L0V5">
    <property type="interactions" value="60"/>
</dbReference>
<dbReference type="STRING" id="263820.PTO0812"/>
<dbReference type="PaxDb" id="263820-PTO0812"/>
<dbReference type="GeneID" id="2844066"/>
<dbReference type="KEGG" id="pto:PTO0812"/>
<dbReference type="PATRIC" id="fig|263820.9.peg.848"/>
<dbReference type="eggNOG" id="arCOG00105">
    <property type="taxonomic scope" value="Archaea"/>
</dbReference>
<dbReference type="HOGENOM" id="CLU_019250_2_2_2"/>
<dbReference type="InParanoid" id="Q6L0V5"/>
<dbReference type="OrthoDB" id="53136at2157"/>
<dbReference type="UniPathway" id="UPA00148"/>
<dbReference type="Proteomes" id="UP000000438">
    <property type="component" value="Chromosome"/>
</dbReference>
<dbReference type="GO" id="GO:0015420">
    <property type="term" value="F:ABC-type vitamin B12 transporter activity"/>
    <property type="evidence" value="ECO:0007669"/>
    <property type="project" value="UniProtKB-UniRule"/>
</dbReference>
<dbReference type="GO" id="GO:0003824">
    <property type="term" value="F:catalytic activity"/>
    <property type="evidence" value="ECO:0007669"/>
    <property type="project" value="InterPro"/>
</dbReference>
<dbReference type="GO" id="GO:0009236">
    <property type="term" value="P:cobalamin biosynthetic process"/>
    <property type="evidence" value="ECO:0007669"/>
    <property type="project" value="UniProtKB-UniRule"/>
</dbReference>
<dbReference type="CDD" id="cd05389">
    <property type="entry name" value="CobQ_N"/>
    <property type="match status" value="1"/>
</dbReference>
<dbReference type="CDD" id="cd01750">
    <property type="entry name" value="GATase1_CobQ"/>
    <property type="match status" value="1"/>
</dbReference>
<dbReference type="Gene3D" id="3.40.50.880">
    <property type="match status" value="1"/>
</dbReference>
<dbReference type="Gene3D" id="3.40.50.300">
    <property type="entry name" value="P-loop containing nucleotide triphosphate hydrolases"/>
    <property type="match status" value="1"/>
</dbReference>
<dbReference type="HAMAP" id="MF_00028">
    <property type="entry name" value="CobQ"/>
    <property type="match status" value="1"/>
</dbReference>
<dbReference type="InterPro" id="IPR029062">
    <property type="entry name" value="Class_I_gatase-like"/>
</dbReference>
<dbReference type="InterPro" id="IPR002586">
    <property type="entry name" value="CobQ/CobB/MinD/ParA_Nub-bd_dom"/>
</dbReference>
<dbReference type="InterPro" id="IPR033949">
    <property type="entry name" value="CobQ_GATase1"/>
</dbReference>
<dbReference type="InterPro" id="IPR047045">
    <property type="entry name" value="CobQ_N"/>
</dbReference>
<dbReference type="InterPro" id="IPR004459">
    <property type="entry name" value="CobQ_synth"/>
</dbReference>
<dbReference type="InterPro" id="IPR011698">
    <property type="entry name" value="GATase_3"/>
</dbReference>
<dbReference type="InterPro" id="IPR027417">
    <property type="entry name" value="P-loop_NTPase"/>
</dbReference>
<dbReference type="NCBIfam" id="TIGR00313">
    <property type="entry name" value="cobQ"/>
    <property type="match status" value="1"/>
</dbReference>
<dbReference type="NCBIfam" id="NF001989">
    <property type="entry name" value="PRK00784.1"/>
    <property type="match status" value="1"/>
</dbReference>
<dbReference type="PANTHER" id="PTHR21343:SF1">
    <property type="entry name" value="COBYRIC ACID SYNTHASE"/>
    <property type="match status" value="1"/>
</dbReference>
<dbReference type="PANTHER" id="PTHR21343">
    <property type="entry name" value="DETHIOBIOTIN SYNTHETASE"/>
    <property type="match status" value="1"/>
</dbReference>
<dbReference type="Pfam" id="PF01656">
    <property type="entry name" value="CbiA"/>
    <property type="match status" value="1"/>
</dbReference>
<dbReference type="Pfam" id="PF07685">
    <property type="entry name" value="GATase_3"/>
    <property type="match status" value="1"/>
</dbReference>
<dbReference type="SUPFAM" id="SSF52317">
    <property type="entry name" value="Class I glutamine amidotransferase-like"/>
    <property type="match status" value="1"/>
</dbReference>
<dbReference type="SUPFAM" id="SSF52540">
    <property type="entry name" value="P-loop containing nucleoside triphosphate hydrolases"/>
    <property type="match status" value="1"/>
</dbReference>
<dbReference type="PROSITE" id="PS51274">
    <property type="entry name" value="GATASE_COBBQ"/>
    <property type="match status" value="1"/>
</dbReference>
<proteinExistence type="inferred from homology"/>
<organism>
    <name type="scientific">Picrophilus torridus (strain ATCC 700027 / DSM 9790 / JCM 10055 / NBRC 100828 / KAW 2/3)</name>
    <dbReference type="NCBI Taxonomy" id="1122961"/>
    <lineage>
        <taxon>Archaea</taxon>
        <taxon>Methanobacteriati</taxon>
        <taxon>Thermoplasmatota</taxon>
        <taxon>Thermoplasmata</taxon>
        <taxon>Thermoplasmatales</taxon>
        <taxon>Picrophilaceae</taxon>
        <taxon>Picrophilus</taxon>
    </lineage>
</organism>
<keyword id="KW-0169">Cobalamin biosynthesis</keyword>
<keyword id="KW-0315">Glutamine amidotransferase</keyword>
<protein>
    <recommendedName>
        <fullName evidence="1">Probable cobyric acid synthase</fullName>
    </recommendedName>
</protein>
<name>COBQ_PICTO</name>
<gene>
    <name evidence="1" type="primary">cobQ</name>
    <name type="ordered locus">PTO0812</name>
</gene>